<name>FISL_NEIMA</name>
<reference key="1">
    <citation type="journal article" date="2000" name="Nature">
        <title>Complete DNA sequence of a serogroup A strain of Neisseria meningitidis Z2491.</title>
        <authorList>
            <person name="Parkhill J."/>
            <person name="Achtman M."/>
            <person name="James K.D."/>
            <person name="Bentley S.D."/>
            <person name="Churcher C.M."/>
            <person name="Klee S.R."/>
            <person name="Morelli G."/>
            <person name="Basham D."/>
            <person name="Brown D."/>
            <person name="Chillingworth T."/>
            <person name="Davies R.M."/>
            <person name="Davis P."/>
            <person name="Devlin K."/>
            <person name="Feltwell T."/>
            <person name="Hamlin N."/>
            <person name="Holroyd S."/>
            <person name="Jagels K."/>
            <person name="Leather S."/>
            <person name="Moule S."/>
            <person name="Mungall K.L."/>
            <person name="Quail M.A."/>
            <person name="Rajandream M.A."/>
            <person name="Rutherford K.M."/>
            <person name="Simmonds M."/>
            <person name="Skelton J."/>
            <person name="Whitehead S."/>
            <person name="Spratt B.G."/>
            <person name="Barrell B.G."/>
        </authorList>
    </citation>
    <scope>NUCLEOTIDE SEQUENCE [LARGE SCALE GENOMIC DNA]</scope>
    <source>
        <strain>DSM 15465 / Z2491</strain>
    </source>
</reference>
<accession>P64130</accession>
<accession>A1ISK9</accession>
<accession>Q9JR42</accession>
<comment type="similarity">
    <text evidence="2">Belongs to the transcriptional regulatory Fis family.</text>
</comment>
<keyword id="KW-0238">DNA-binding</keyword>
<protein>
    <recommendedName>
        <fullName>Putative Fis-like DNA-binding protein</fullName>
    </recommendedName>
</protein>
<sequence>MPHTLPDISQCIRQNLEQYFKDLNGTEPCGVYDMVLHQVEKPLLVCVMEQCGGNQSKASVMLGLNRNTLRKKLIQHGLL</sequence>
<proteinExistence type="inferred from homology"/>
<dbReference type="EMBL" id="AL157959">
    <property type="protein sequence ID" value="CAM08768.1"/>
    <property type="molecule type" value="Genomic_DNA"/>
</dbReference>
<dbReference type="RefSeq" id="WP_002213092.1">
    <property type="nucleotide sequence ID" value="NC_003116.1"/>
</dbReference>
<dbReference type="SMR" id="P64130"/>
<dbReference type="EnsemblBacteria" id="CAM08768">
    <property type="protein sequence ID" value="CAM08768"/>
    <property type="gene ID" value="NMA1632"/>
</dbReference>
<dbReference type="KEGG" id="nma:NMA1632"/>
<dbReference type="HOGENOM" id="CLU_158040_2_1_4"/>
<dbReference type="Proteomes" id="UP000000626">
    <property type="component" value="Chromosome"/>
</dbReference>
<dbReference type="GO" id="GO:0043565">
    <property type="term" value="F:sequence-specific DNA binding"/>
    <property type="evidence" value="ECO:0007669"/>
    <property type="project" value="InterPro"/>
</dbReference>
<dbReference type="GO" id="GO:0006355">
    <property type="term" value="P:regulation of DNA-templated transcription"/>
    <property type="evidence" value="ECO:0007669"/>
    <property type="project" value="InterPro"/>
</dbReference>
<dbReference type="Gene3D" id="1.10.10.60">
    <property type="entry name" value="Homeodomain-like"/>
    <property type="match status" value="1"/>
</dbReference>
<dbReference type="InterPro" id="IPR005412">
    <property type="entry name" value="Fis_DNA-bd"/>
</dbReference>
<dbReference type="InterPro" id="IPR009057">
    <property type="entry name" value="Homeodomain-like_sf"/>
</dbReference>
<dbReference type="InterPro" id="IPR002197">
    <property type="entry name" value="HTH_Fis"/>
</dbReference>
<dbReference type="InterPro" id="IPR050207">
    <property type="entry name" value="Trans_regulatory_Fis"/>
</dbReference>
<dbReference type="NCBIfam" id="NF002517">
    <property type="entry name" value="PRK01905.1"/>
    <property type="match status" value="1"/>
</dbReference>
<dbReference type="PANTHER" id="PTHR47918">
    <property type="entry name" value="DNA-BINDING PROTEIN FIS"/>
    <property type="match status" value="1"/>
</dbReference>
<dbReference type="PANTHER" id="PTHR47918:SF1">
    <property type="entry name" value="DNA-BINDING PROTEIN FIS"/>
    <property type="match status" value="1"/>
</dbReference>
<dbReference type="Pfam" id="PF02954">
    <property type="entry name" value="HTH_8"/>
    <property type="match status" value="1"/>
</dbReference>
<dbReference type="PIRSF" id="PIRSF002097">
    <property type="entry name" value="DNA-binding_Fis"/>
    <property type="match status" value="1"/>
</dbReference>
<dbReference type="PRINTS" id="PR01590">
    <property type="entry name" value="HTHFIS"/>
</dbReference>
<dbReference type="SUPFAM" id="SSF46689">
    <property type="entry name" value="Homeodomain-like"/>
    <property type="match status" value="1"/>
</dbReference>
<feature type="chain" id="PRO_0000203905" description="Putative Fis-like DNA-binding protein">
    <location>
        <begin position="1"/>
        <end position="79"/>
    </location>
</feature>
<feature type="DNA-binding region" description="H-T-H motif" evidence="1">
    <location>
        <begin position="55"/>
        <end position="74"/>
    </location>
</feature>
<gene>
    <name type="ordered locus">NMA1632</name>
</gene>
<evidence type="ECO:0000250" key="1"/>
<evidence type="ECO:0000305" key="2"/>
<organism>
    <name type="scientific">Neisseria meningitidis serogroup A / serotype 4A (strain DSM 15465 / Z2491)</name>
    <dbReference type="NCBI Taxonomy" id="122587"/>
    <lineage>
        <taxon>Bacteria</taxon>
        <taxon>Pseudomonadati</taxon>
        <taxon>Pseudomonadota</taxon>
        <taxon>Betaproteobacteria</taxon>
        <taxon>Neisseriales</taxon>
        <taxon>Neisseriaceae</taxon>
        <taxon>Neisseria</taxon>
    </lineage>
</organism>